<keyword id="KW-0963">Cytoplasm</keyword>
<keyword id="KW-0227">DNA damage</keyword>
<keyword id="KW-0233">DNA recombination</keyword>
<keyword id="KW-0234">DNA repair</keyword>
<keyword id="KW-0255">Endonuclease</keyword>
<keyword id="KW-0378">Hydrolase</keyword>
<keyword id="KW-0460">Magnesium</keyword>
<keyword id="KW-0479">Metal-binding</keyword>
<keyword id="KW-0540">Nuclease</keyword>
<keyword id="KW-1185">Reference proteome</keyword>
<proteinExistence type="inferred from homology"/>
<accession>A3CPY5</accession>
<name>RECU_STRSV</name>
<feature type="chain" id="PRO_1000016755" description="Holliday junction resolvase RecU">
    <location>
        <begin position="1"/>
        <end position="200"/>
    </location>
</feature>
<feature type="binding site" evidence="1">
    <location>
        <position position="82"/>
    </location>
    <ligand>
        <name>Mg(2+)</name>
        <dbReference type="ChEBI" id="CHEBI:18420"/>
    </ligand>
</feature>
<feature type="binding site" evidence="1">
    <location>
        <position position="84"/>
    </location>
    <ligand>
        <name>Mg(2+)</name>
        <dbReference type="ChEBI" id="CHEBI:18420"/>
    </ligand>
</feature>
<feature type="binding site" evidence="1">
    <location>
        <position position="97"/>
    </location>
    <ligand>
        <name>Mg(2+)</name>
        <dbReference type="ChEBI" id="CHEBI:18420"/>
    </ligand>
</feature>
<feature type="binding site" evidence="1">
    <location>
        <position position="116"/>
    </location>
    <ligand>
        <name>Mg(2+)</name>
        <dbReference type="ChEBI" id="CHEBI:18420"/>
    </ligand>
</feature>
<feature type="site" description="Transition state stabilizer" evidence="1">
    <location>
        <position position="99"/>
    </location>
</feature>
<dbReference type="EC" id="3.1.21.10" evidence="1"/>
<dbReference type="EMBL" id="CP000387">
    <property type="protein sequence ID" value="ABN45240.1"/>
    <property type="molecule type" value="Genomic_DNA"/>
</dbReference>
<dbReference type="RefSeq" id="WP_002905196.1">
    <property type="nucleotide sequence ID" value="NC_009009.1"/>
</dbReference>
<dbReference type="RefSeq" id="YP_001035790.1">
    <property type="nucleotide sequence ID" value="NC_009009.1"/>
</dbReference>
<dbReference type="SMR" id="A3CPY5"/>
<dbReference type="STRING" id="388919.SSA_1859"/>
<dbReference type="KEGG" id="ssa:SSA_1859"/>
<dbReference type="PATRIC" id="fig|388919.9.peg.1764"/>
<dbReference type="eggNOG" id="COG3331">
    <property type="taxonomic scope" value="Bacteria"/>
</dbReference>
<dbReference type="HOGENOM" id="CLU_096340_0_0_9"/>
<dbReference type="OrthoDB" id="9783592at2"/>
<dbReference type="Proteomes" id="UP000002148">
    <property type="component" value="Chromosome"/>
</dbReference>
<dbReference type="GO" id="GO:0005737">
    <property type="term" value="C:cytoplasm"/>
    <property type="evidence" value="ECO:0007669"/>
    <property type="project" value="UniProtKB-SubCell"/>
</dbReference>
<dbReference type="GO" id="GO:0004519">
    <property type="term" value="F:endonuclease activity"/>
    <property type="evidence" value="ECO:0007669"/>
    <property type="project" value="UniProtKB-UniRule"/>
</dbReference>
<dbReference type="GO" id="GO:0000287">
    <property type="term" value="F:magnesium ion binding"/>
    <property type="evidence" value="ECO:0007669"/>
    <property type="project" value="UniProtKB-UniRule"/>
</dbReference>
<dbReference type="GO" id="GO:0003676">
    <property type="term" value="F:nucleic acid binding"/>
    <property type="evidence" value="ECO:0007669"/>
    <property type="project" value="InterPro"/>
</dbReference>
<dbReference type="GO" id="GO:0007059">
    <property type="term" value="P:chromosome segregation"/>
    <property type="evidence" value="ECO:0007669"/>
    <property type="project" value="UniProtKB-UniRule"/>
</dbReference>
<dbReference type="GO" id="GO:0006310">
    <property type="term" value="P:DNA recombination"/>
    <property type="evidence" value="ECO:0007669"/>
    <property type="project" value="UniProtKB-UniRule"/>
</dbReference>
<dbReference type="GO" id="GO:0006281">
    <property type="term" value="P:DNA repair"/>
    <property type="evidence" value="ECO:0007669"/>
    <property type="project" value="UniProtKB-UniRule"/>
</dbReference>
<dbReference type="CDD" id="cd22354">
    <property type="entry name" value="RecU-like"/>
    <property type="match status" value="1"/>
</dbReference>
<dbReference type="Gene3D" id="3.40.1350.10">
    <property type="match status" value="1"/>
</dbReference>
<dbReference type="HAMAP" id="MF_00130">
    <property type="entry name" value="RecU"/>
    <property type="match status" value="1"/>
</dbReference>
<dbReference type="InterPro" id="IPR004612">
    <property type="entry name" value="Resolv_RecU"/>
</dbReference>
<dbReference type="InterPro" id="IPR011335">
    <property type="entry name" value="Restrct_endonuc-II-like"/>
</dbReference>
<dbReference type="InterPro" id="IPR011856">
    <property type="entry name" value="tRNA_endonuc-like_dom_sf"/>
</dbReference>
<dbReference type="NCBIfam" id="NF002580">
    <property type="entry name" value="PRK02234.1-1"/>
    <property type="match status" value="1"/>
</dbReference>
<dbReference type="NCBIfam" id="NF002581">
    <property type="entry name" value="PRK02234.1-2"/>
    <property type="match status" value="1"/>
</dbReference>
<dbReference type="NCBIfam" id="NF002584">
    <property type="entry name" value="PRK02234.1-5"/>
    <property type="match status" value="1"/>
</dbReference>
<dbReference type="NCBIfam" id="TIGR00648">
    <property type="entry name" value="recU"/>
    <property type="match status" value="1"/>
</dbReference>
<dbReference type="Pfam" id="PF03838">
    <property type="entry name" value="RecU"/>
    <property type="match status" value="1"/>
</dbReference>
<dbReference type="PIRSF" id="PIRSF037785">
    <property type="entry name" value="RecU"/>
    <property type="match status" value="1"/>
</dbReference>
<dbReference type="SUPFAM" id="SSF52980">
    <property type="entry name" value="Restriction endonuclease-like"/>
    <property type="match status" value="1"/>
</dbReference>
<comment type="function">
    <text evidence="1">Endonuclease that resolves Holliday junction intermediates in genetic recombination. Cleaves mobile four-strand junctions by introducing symmetrical nicks in paired strands. Promotes annealing of linear ssDNA with homologous dsDNA. Required for DNA repair, homologous recombination and chromosome segregation.</text>
</comment>
<comment type="catalytic activity">
    <reaction evidence="1">
        <text>Endonucleolytic cleavage at a junction such as a reciprocal single-stranded crossover between two homologous DNA duplexes (Holliday junction).</text>
        <dbReference type="EC" id="3.1.21.10"/>
    </reaction>
</comment>
<comment type="cofactor">
    <cofactor evidence="1">
        <name>Mg(2+)</name>
        <dbReference type="ChEBI" id="CHEBI:18420"/>
    </cofactor>
    <text evidence="1">Binds 1 Mg(2+) ion per subunit.</text>
</comment>
<comment type="subcellular location">
    <subcellularLocation>
        <location evidence="1">Cytoplasm</location>
    </subcellularLocation>
</comment>
<comment type="similarity">
    <text evidence="1">Belongs to the RecU family.</text>
</comment>
<reference key="1">
    <citation type="journal article" date="2007" name="J. Bacteriol.">
        <title>Genome of the opportunistic pathogen Streptococcus sanguinis.</title>
        <authorList>
            <person name="Xu P."/>
            <person name="Alves J.M."/>
            <person name="Kitten T."/>
            <person name="Brown A."/>
            <person name="Chen Z."/>
            <person name="Ozaki L.S."/>
            <person name="Manque P."/>
            <person name="Ge X."/>
            <person name="Serrano M.G."/>
            <person name="Puiu D."/>
            <person name="Hendricks S."/>
            <person name="Wang Y."/>
            <person name="Chaplin M.D."/>
            <person name="Akan D."/>
            <person name="Paik S."/>
            <person name="Peterson D.L."/>
            <person name="Macrina F.L."/>
            <person name="Buck G.A."/>
        </authorList>
    </citation>
    <scope>NUCLEOTIDE SEQUENCE [LARGE SCALE GENOMIC DNA]</scope>
    <source>
        <strain>SK36</strain>
    </source>
</reference>
<sequence length="200" mass="23158">MVNYPHKLKAKSSINRPVPGIVNFANRGMSFEKMINESNSYYLSRGLAVIHKKPTPIQIVKVDYPHRSRAKIVEAYFRQASTTDYSGVYKGHYIDFEAKETRQKKSMPMKNFHSHQIEHMEAVLEQKGICFVLLHFSSLRETYLLPASYLIEFYKIDKGGKSMPLTYIQEHGYPIEMQQLPSIPYLEIIEQKLLGGIINE</sequence>
<gene>
    <name evidence="1" type="primary">recU</name>
    <name type="ordered locus">SSA_1859</name>
</gene>
<evidence type="ECO:0000255" key="1">
    <source>
        <dbReference type="HAMAP-Rule" id="MF_00130"/>
    </source>
</evidence>
<organism>
    <name type="scientific">Streptococcus sanguinis (strain SK36)</name>
    <dbReference type="NCBI Taxonomy" id="388919"/>
    <lineage>
        <taxon>Bacteria</taxon>
        <taxon>Bacillati</taxon>
        <taxon>Bacillota</taxon>
        <taxon>Bacilli</taxon>
        <taxon>Lactobacillales</taxon>
        <taxon>Streptococcaceae</taxon>
        <taxon>Streptococcus</taxon>
    </lineage>
</organism>
<protein>
    <recommendedName>
        <fullName evidence="1">Holliday junction resolvase RecU</fullName>
        <ecNumber evidence="1">3.1.21.10</ecNumber>
    </recommendedName>
    <alternativeName>
        <fullName evidence="1">Recombination protein U homolog</fullName>
    </alternativeName>
</protein>